<feature type="chain" id="PRO_0000145380" description="DNA topoisomerase 2">
    <location>
        <begin position="1"/>
        <end position="1473"/>
    </location>
</feature>
<feature type="domain" description="Toprim" evidence="3">
    <location>
        <begin position="455"/>
        <end position="569"/>
    </location>
</feature>
<feature type="domain" description="Topo IIA-type catalytic" evidence="4">
    <location>
        <begin position="704"/>
        <end position="1163"/>
    </location>
</feature>
<feature type="region of interest" description="Disordered" evidence="5">
    <location>
        <begin position="1"/>
        <end position="20"/>
    </location>
</feature>
<feature type="region of interest" description="Interaction with DNA" evidence="2">
    <location>
        <begin position="345"/>
        <end position="347"/>
    </location>
</feature>
<feature type="region of interest" description="Interaction with DNA" evidence="2">
    <location>
        <begin position="980"/>
        <end position="989"/>
    </location>
</feature>
<feature type="region of interest" description="Disordered" evidence="5">
    <location>
        <begin position="1195"/>
        <end position="1230"/>
    </location>
</feature>
<feature type="region of interest" description="Disordered" evidence="5">
    <location>
        <begin position="1242"/>
        <end position="1297"/>
    </location>
</feature>
<feature type="region of interest" description="Disordered" evidence="5">
    <location>
        <begin position="1313"/>
        <end position="1473"/>
    </location>
</feature>
<feature type="compositionally biased region" description="Low complexity" evidence="5">
    <location>
        <begin position="9"/>
        <end position="20"/>
    </location>
</feature>
<feature type="compositionally biased region" description="Basic residues" evidence="5">
    <location>
        <begin position="1200"/>
        <end position="1216"/>
    </location>
</feature>
<feature type="compositionally biased region" description="Basic residues" evidence="5">
    <location>
        <begin position="1278"/>
        <end position="1288"/>
    </location>
</feature>
<feature type="compositionally biased region" description="Low complexity" evidence="5">
    <location>
        <begin position="1351"/>
        <end position="1360"/>
    </location>
</feature>
<feature type="compositionally biased region" description="Polar residues" evidence="5">
    <location>
        <begin position="1394"/>
        <end position="1404"/>
    </location>
</feature>
<feature type="compositionally biased region" description="Polar residues" evidence="5">
    <location>
        <begin position="1417"/>
        <end position="1427"/>
    </location>
</feature>
<feature type="compositionally biased region" description="Acidic residues" evidence="5">
    <location>
        <begin position="1453"/>
        <end position="1473"/>
    </location>
</feature>
<feature type="active site" description="O-(5'-phospho-DNA)-tyrosine intermediate" evidence="4">
    <location>
        <position position="794"/>
    </location>
</feature>
<feature type="binding site" evidence="2">
    <location>
        <position position="91"/>
    </location>
    <ligand>
        <name>ATP</name>
        <dbReference type="ChEBI" id="CHEBI:30616"/>
    </ligand>
</feature>
<feature type="binding site" evidence="2">
    <location>
        <position position="120"/>
    </location>
    <ligand>
        <name>ATP</name>
        <dbReference type="ChEBI" id="CHEBI:30616"/>
    </ligand>
</feature>
<feature type="binding site" evidence="2">
    <location>
        <begin position="148"/>
        <end position="150"/>
    </location>
    <ligand>
        <name>ATP</name>
        <dbReference type="ChEBI" id="CHEBI:30616"/>
    </ligand>
</feature>
<feature type="binding site" evidence="2">
    <location>
        <begin position="161"/>
        <end position="168"/>
    </location>
    <ligand>
        <name>ATP</name>
        <dbReference type="ChEBI" id="CHEBI:30616"/>
    </ligand>
</feature>
<feature type="binding site" evidence="2">
    <location>
        <begin position="378"/>
        <end position="380"/>
    </location>
    <ligand>
        <name>ATP</name>
        <dbReference type="ChEBI" id="CHEBI:30616"/>
    </ligand>
</feature>
<feature type="binding site" evidence="3">
    <location>
        <position position="461"/>
    </location>
    <ligand>
        <name>Mg(2+)</name>
        <dbReference type="ChEBI" id="CHEBI:18420"/>
        <label>1</label>
        <note>catalytic</note>
    </ligand>
</feature>
<feature type="binding site" evidence="3">
    <location>
        <position position="538"/>
    </location>
    <ligand>
        <name>Mg(2+)</name>
        <dbReference type="ChEBI" id="CHEBI:18420"/>
        <label>1</label>
        <note>catalytic</note>
    </ligand>
</feature>
<feature type="binding site" evidence="3">
    <location>
        <position position="538"/>
    </location>
    <ligand>
        <name>Mg(2+)</name>
        <dbReference type="ChEBI" id="CHEBI:18420"/>
        <label>2</label>
    </ligand>
</feature>
<feature type="binding site" evidence="3">
    <location>
        <position position="540"/>
    </location>
    <ligand>
        <name>Mg(2+)</name>
        <dbReference type="ChEBI" id="CHEBI:18420"/>
        <label>2</label>
    </ligand>
</feature>
<feature type="site" description="Interaction with DNA" evidence="3">
    <location>
        <position position="489"/>
    </location>
</feature>
<feature type="site" description="Interaction with DNA" evidence="3">
    <location>
        <position position="492"/>
    </location>
</feature>
<feature type="site" description="Interaction with DNA" evidence="3">
    <location>
        <position position="662"/>
    </location>
</feature>
<feature type="site" description="Interaction with DNA" evidence="3">
    <location>
        <position position="663"/>
    </location>
</feature>
<feature type="site" description="Interaction with DNA" evidence="3">
    <location>
        <position position="712"/>
    </location>
</feature>
<feature type="site" description="Interaction with DNA" evidence="3">
    <location>
        <position position="746"/>
    </location>
</feature>
<feature type="site" description="Interaction with DNA" evidence="3">
    <location>
        <position position="752"/>
    </location>
</feature>
<feature type="site" description="Transition state stabilizer" evidence="1">
    <location>
        <position position="793"/>
    </location>
</feature>
<feature type="site" description="Important for DNA bending; intercalates between base pairs of target DNA" evidence="1">
    <location>
        <position position="845"/>
    </location>
</feature>
<feature type="site" description="Interaction with DNA" evidence="2">
    <location>
        <position position="924"/>
    </location>
</feature>
<feature type="sequence variant" description="In strain: cv. Kas-1.">
    <original>K</original>
    <variation>N</variation>
    <location>
        <position position="1213"/>
    </location>
</feature>
<feature type="sequence variant" description="In strain: cv. Kas-1.">
    <original>A</original>
    <variation>G</variation>
    <location>
        <position position="1245"/>
    </location>
</feature>
<feature type="sequence variant" description="In strain: cv. Kas-1.">
    <original>E</original>
    <variation>G</variation>
    <location>
        <position position="1299"/>
    </location>
</feature>
<keyword id="KW-0025">Alternative splicing</keyword>
<keyword id="KW-0067">ATP-binding</keyword>
<keyword id="KW-0238">DNA-binding</keyword>
<keyword id="KW-0413">Isomerase</keyword>
<keyword id="KW-0460">Magnesium</keyword>
<keyword id="KW-0479">Metal-binding</keyword>
<keyword id="KW-0547">Nucleotide-binding</keyword>
<keyword id="KW-1185">Reference proteome</keyword>
<keyword id="KW-0799">Topoisomerase</keyword>
<accession>P30182</accession>
<accession>Q38807</accession>
<comment type="function">
    <text>Control of topological states of DNA by transient breakage and subsequent rejoining of DNA strands. Topoisomerase II makes double-strand breaks.</text>
</comment>
<comment type="catalytic activity">
    <reaction evidence="3">
        <text>ATP-dependent breakage, passage and rejoining of double-stranded DNA.</text>
        <dbReference type="EC" id="5.6.2.2"/>
    </reaction>
</comment>
<comment type="cofactor">
    <cofactor evidence="3">
        <name>Mg(2+)</name>
        <dbReference type="ChEBI" id="CHEBI:18420"/>
    </cofactor>
    <cofactor evidence="3">
        <name>Mn(2+)</name>
        <dbReference type="ChEBI" id="CHEBI:29035"/>
    </cofactor>
    <cofactor evidence="3">
        <name>Ca(2+)</name>
        <dbReference type="ChEBI" id="CHEBI:29108"/>
    </cofactor>
    <text evidence="3">Binds two Mg(2+) per subunit. The magnesium ions form salt bridges with both the protein and the DNA. Can also accept other divalent metal cations, such as Mn(2+) or Ca(2+).</text>
</comment>
<comment type="subunit">
    <text>Homodimer.</text>
</comment>
<comment type="alternative products">
    <event type="alternative splicing"/>
    <isoform>
        <id>P30182-1</id>
        <name>1</name>
        <sequence type="displayed"/>
    </isoform>
    <text>A number of isoforms are produced. According to EST sequences.</text>
</comment>
<comment type="miscellaneous">
    <text>Eukaryotic topoisomerase I and II can relax both negative and positive supercoils, whereas prokaryotic enzymes relax only negative supercoils.</text>
</comment>
<comment type="similarity">
    <text evidence="6">Belongs to the type II topoisomerase family.</text>
</comment>
<proteinExistence type="evidence at transcript level"/>
<evidence type="ECO:0000250" key="1"/>
<evidence type="ECO:0000250" key="2">
    <source>
        <dbReference type="UniProtKB" id="P11388"/>
    </source>
</evidence>
<evidence type="ECO:0000255" key="3">
    <source>
        <dbReference type="PROSITE-ProRule" id="PRU00995"/>
    </source>
</evidence>
<evidence type="ECO:0000255" key="4">
    <source>
        <dbReference type="PROSITE-ProRule" id="PRU01384"/>
    </source>
</evidence>
<evidence type="ECO:0000256" key="5">
    <source>
        <dbReference type="SAM" id="MobiDB-lite"/>
    </source>
</evidence>
<evidence type="ECO:0000305" key="6"/>
<organism>
    <name type="scientific">Arabidopsis thaliana</name>
    <name type="common">Mouse-ear cress</name>
    <dbReference type="NCBI Taxonomy" id="3702"/>
    <lineage>
        <taxon>Eukaryota</taxon>
        <taxon>Viridiplantae</taxon>
        <taxon>Streptophyta</taxon>
        <taxon>Embryophyta</taxon>
        <taxon>Tracheophyta</taxon>
        <taxon>Spermatophyta</taxon>
        <taxon>Magnoliopsida</taxon>
        <taxon>eudicotyledons</taxon>
        <taxon>Gunneridae</taxon>
        <taxon>Pentapetalae</taxon>
        <taxon>rosids</taxon>
        <taxon>malvids</taxon>
        <taxon>Brassicales</taxon>
        <taxon>Brassicaceae</taxon>
        <taxon>Camelineae</taxon>
        <taxon>Arabidopsis</taxon>
    </lineage>
</organism>
<name>TOP2_ARATH</name>
<dbReference type="EC" id="5.6.2.2" evidence="3"/>
<dbReference type="EMBL" id="L21015">
    <property type="protein sequence ID" value="AAA65448.1"/>
    <property type="molecule type" value="mRNA"/>
</dbReference>
<dbReference type="EMBL" id="AP001297">
    <property type="protein sequence ID" value="BAB03006.1"/>
    <property type="molecule type" value="Genomic_DNA"/>
</dbReference>
<dbReference type="EMBL" id="CP002686">
    <property type="protein sequence ID" value="AEE76826.1"/>
    <property type="molecule type" value="Genomic_DNA"/>
</dbReference>
<dbReference type="EMBL" id="U12284">
    <property type="protein sequence ID" value="AAC48999.1"/>
    <property type="molecule type" value="Genomic_DNA"/>
</dbReference>
<dbReference type="EMBL" id="U12285">
    <property type="protein sequence ID" value="AAC49000.1"/>
    <property type="molecule type" value="Genomic_DNA"/>
</dbReference>
<dbReference type="EMBL" id="M84654">
    <property type="protein sequence ID" value="AAA32877.1"/>
    <property type="molecule type" value="Genomic_DNA"/>
</dbReference>
<dbReference type="PIR" id="S53598">
    <property type="entry name" value="S53599"/>
</dbReference>
<dbReference type="RefSeq" id="NP_189031.1">
    <molecule id="P30182-1"/>
    <property type="nucleotide sequence ID" value="NM_113294.3"/>
</dbReference>
<dbReference type="SMR" id="P30182"/>
<dbReference type="FunCoup" id="P30182">
    <property type="interactions" value="2726"/>
</dbReference>
<dbReference type="STRING" id="3702.P30182"/>
<dbReference type="iPTMnet" id="P30182"/>
<dbReference type="PaxDb" id="3702-AT3G23890.1"/>
<dbReference type="ProteomicsDB" id="232464">
    <molecule id="P30182-1"/>
</dbReference>
<dbReference type="EnsemblPlants" id="AT3G23890.1">
    <molecule id="P30182-1"/>
    <property type="protein sequence ID" value="AT3G23890.1"/>
    <property type="gene ID" value="AT3G23890"/>
</dbReference>
<dbReference type="Gramene" id="AT3G23890.1">
    <molecule id="P30182-1"/>
    <property type="protein sequence ID" value="AT3G23890.1"/>
    <property type="gene ID" value="AT3G23890"/>
</dbReference>
<dbReference type="KEGG" id="ath:AT3G23890"/>
<dbReference type="Araport" id="AT3G23890"/>
<dbReference type="TAIR" id="AT3G23890">
    <property type="gene designation" value="TOPII"/>
</dbReference>
<dbReference type="eggNOG" id="KOG0355">
    <property type="taxonomic scope" value="Eukaryota"/>
</dbReference>
<dbReference type="InParanoid" id="P30182"/>
<dbReference type="OrthoDB" id="276498at2759"/>
<dbReference type="PhylomeDB" id="P30182"/>
<dbReference type="CD-CODE" id="4299E36E">
    <property type="entry name" value="Nucleolus"/>
</dbReference>
<dbReference type="PRO" id="PR:P30182"/>
<dbReference type="Proteomes" id="UP000006548">
    <property type="component" value="Chromosome 3"/>
</dbReference>
<dbReference type="ExpressionAtlas" id="P30182">
    <property type="expression patterns" value="baseline and differential"/>
</dbReference>
<dbReference type="GO" id="GO:0005634">
    <property type="term" value="C:nucleus"/>
    <property type="evidence" value="ECO:0000314"/>
    <property type="project" value="TAIR"/>
</dbReference>
<dbReference type="GO" id="GO:0005524">
    <property type="term" value="F:ATP binding"/>
    <property type="evidence" value="ECO:0007669"/>
    <property type="project" value="UniProtKB-KW"/>
</dbReference>
<dbReference type="GO" id="GO:0003677">
    <property type="term" value="F:DNA binding"/>
    <property type="evidence" value="ECO:0007669"/>
    <property type="project" value="UniProtKB-KW"/>
</dbReference>
<dbReference type="GO" id="GO:0003916">
    <property type="term" value="F:DNA topoisomerase activity"/>
    <property type="evidence" value="ECO:0000250"/>
    <property type="project" value="TAIR"/>
</dbReference>
<dbReference type="GO" id="GO:0003918">
    <property type="term" value="F:DNA topoisomerase type II (double strand cut, ATP-hydrolyzing) activity"/>
    <property type="evidence" value="ECO:0007669"/>
    <property type="project" value="UniProtKB-EC"/>
</dbReference>
<dbReference type="GO" id="GO:0046872">
    <property type="term" value="F:metal ion binding"/>
    <property type="evidence" value="ECO:0007669"/>
    <property type="project" value="UniProtKB-KW"/>
</dbReference>
<dbReference type="GO" id="GO:0006265">
    <property type="term" value="P:DNA topological change"/>
    <property type="evidence" value="ECO:0007669"/>
    <property type="project" value="InterPro"/>
</dbReference>
<dbReference type="CDD" id="cd16930">
    <property type="entry name" value="HATPase_TopII-like"/>
    <property type="match status" value="1"/>
</dbReference>
<dbReference type="CDD" id="cd00187">
    <property type="entry name" value="TOP4c"/>
    <property type="match status" value="1"/>
</dbReference>
<dbReference type="CDD" id="cd03481">
    <property type="entry name" value="TopoIIA_Trans_ScTopoIIA"/>
    <property type="match status" value="1"/>
</dbReference>
<dbReference type="CDD" id="cd03365">
    <property type="entry name" value="TOPRIM_TopoIIA"/>
    <property type="match status" value="1"/>
</dbReference>
<dbReference type="FunFam" id="3.30.1360.40:FF:000003">
    <property type="entry name" value="DNA topoisomerase 2"/>
    <property type="match status" value="1"/>
</dbReference>
<dbReference type="FunFam" id="3.30.1490.30:FF:000001">
    <property type="entry name" value="DNA topoisomerase 2"/>
    <property type="match status" value="1"/>
</dbReference>
<dbReference type="FunFam" id="3.30.230.10:FF:000008">
    <property type="entry name" value="DNA topoisomerase 2"/>
    <property type="match status" value="1"/>
</dbReference>
<dbReference type="FunFam" id="3.30.565.10:FF:000004">
    <property type="entry name" value="DNA topoisomerase 2"/>
    <property type="match status" value="1"/>
</dbReference>
<dbReference type="FunFam" id="3.40.50.670:FF:000001">
    <property type="entry name" value="DNA topoisomerase 2"/>
    <property type="match status" value="2"/>
</dbReference>
<dbReference type="FunFam" id="3.90.199.10:FF:000002">
    <property type="entry name" value="DNA topoisomerase 2"/>
    <property type="match status" value="1"/>
</dbReference>
<dbReference type="Gene3D" id="3.30.1360.40">
    <property type="match status" value="1"/>
</dbReference>
<dbReference type="Gene3D" id="3.30.1490.30">
    <property type="match status" value="1"/>
</dbReference>
<dbReference type="Gene3D" id="3.30.230.10">
    <property type="match status" value="1"/>
</dbReference>
<dbReference type="Gene3D" id="3.40.50.670">
    <property type="match status" value="1"/>
</dbReference>
<dbReference type="Gene3D" id="3.30.565.10">
    <property type="entry name" value="Histidine kinase-like ATPase, C-terminal domain"/>
    <property type="match status" value="1"/>
</dbReference>
<dbReference type="Gene3D" id="3.90.199.10">
    <property type="entry name" value="Topoisomerase II, domain 5"/>
    <property type="match status" value="1"/>
</dbReference>
<dbReference type="Gene3D" id="1.10.268.10">
    <property type="entry name" value="Topoisomerase, domain 3"/>
    <property type="match status" value="1"/>
</dbReference>
<dbReference type="InterPro" id="IPR050634">
    <property type="entry name" value="DNA_Topoisomerase_II"/>
</dbReference>
<dbReference type="InterPro" id="IPR036890">
    <property type="entry name" value="HATPase_C_sf"/>
</dbReference>
<dbReference type="InterPro" id="IPR020568">
    <property type="entry name" value="Ribosomal_Su5_D2-typ_SF"/>
</dbReference>
<dbReference type="InterPro" id="IPR014721">
    <property type="entry name" value="Ribsml_uS5_D2-typ_fold_subgr"/>
</dbReference>
<dbReference type="InterPro" id="IPR001241">
    <property type="entry name" value="Topo_IIA"/>
</dbReference>
<dbReference type="InterPro" id="IPR013760">
    <property type="entry name" value="Topo_IIA-like_dom_sf"/>
</dbReference>
<dbReference type="InterPro" id="IPR013758">
    <property type="entry name" value="Topo_IIA_A/C_ab"/>
</dbReference>
<dbReference type="InterPro" id="IPR013757">
    <property type="entry name" value="Topo_IIA_A_a_sf"/>
</dbReference>
<dbReference type="InterPro" id="IPR013759">
    <property type="entry name" value="Topo_IIA_B_C"/>
</dbReference>
<dbReference type="InterPro" id="IPR013506">
    <property type="entry name" value="Topo_IIA_bsu_dom2"/>
</dbReference>
<dbReference type="InterPro" id="IPR002205">
    <property type="entry name" value="Topo_IIA_dom_A"/>
</dbReference>
<dbReference type="InterPro" id="IPR001154">
    <property type="entry name" value="TopoII_euk"/>
</dbReference>
<dbReference type="InterPro" id="IPR018522">
    <property type="entry name" value="TopoIIA_CS"/>
</dbReference>
<dbReference type="InterPro" id="IPR031660">
    <property type="entry name" value="TOPRIM_C"/>
</dbReference>
<dbReference type="InterPro" id="IPR006171">
    <property type="entry name" value="TOPRIM_dom"/>
</dbReference>
<dbReference type="InterPro" id="IPR034157">
    <property type="entry name" value="TOPRIM_TopoII"/>
</dbReference>
<dbReference type="PANTHER" id="PTHR10169:SF38">
    <property type="entry name" value="DNA TOPOISOMERASE 2"/>
    <property type="match status" value="1"/>
</dbReference>
<dbReference type="PANTHER" id="PTHR10169">
    <property type="entry name" value="DNA TOPOISOMERASE/GYRASE"/>
    <property type="match status" value="1"/>
</dbReference>
<dbReference type="Pfam" id="PF00204">
    <property type="entry name" value="DNA_gyraseB"/>
    <property type="match status" value="1"/>
</dbReference>
<dbReference type="Pfam" id="PF00521">
    <property type="entry name" value="DNA_topoisoIV"/>
    <property type="match status" value="1"/>
</dbReference>
<dbReference type="Pfam" id="PF02518">
    <property type="entry name" value="HATPase_c"/>
    <property type="match status" value="1"/>
</dbReference>
<dbReference type="Pfam" id="PF01751">
    <property type="entry name" value="Toprim"/>
    <property type="match status" value="1"/>
</dbReference>
<dbReference type="Pfam" id="PF16898">
    <property type="entry name" value="TOPRIM_C"/>
    <property type="match status" value="1"/>
</dbReference>
<dbReference type="PRINTS" id="PR01158">
    <property type="entry name" value="TOPISMRASEII"/>
</dbReference>
<dbReference type="PRINTS" id="PR00418">
    <property type="entry name" value="TPI2FAMILY"/>
</dbReference>
<dbReference type="SMART" id="SM00387">
    <property type="entry name" value="HATPase_c"/>
    <property type="match status" value="1"/>
</dbReference>
<dbReference type="SMART" id="SM00433">
    <property type="entry name" value="TOP2c"/>
    <property type="match status" value="1"/>
</dbReference>
<dbReference type="SMART" id="SM00434">
    <property type="entry name" value="TOP4c"/>
    <property type="match status" value="1"/>
</dbReference>
<dbReference type="SUPFAM" id="SSF55874">
    <property type="entry name" value="ATPase domain of HSP90 chaperone/DNA topoisomerase II/histidine kinase"/>
    <property type="match status" value="1"/>
</dbReference>
<dbReference type="SUPFAM" id="SSF54211">
    <property type="entry name" value="Ribosomal protein S5 domain 2-like"/>
    <property type="match status" value="1"/>
</dbReference>
<dbReference type="SUPFAM" id="SSF56719">
    <property type="entry name" value="Type II DNA topoisomerase"/>
    <property type="match status" value="1"/>
</dbReference>
<dbReference type="PROSITE" id="PS52040">
    <property type="entry name" value="TOPO_IIA"/>
    <property type="match status" value="1"/>
</dbReference>
<dbReference type="PROSITE" id="PS00177">
    <property type="entry name" value="TOPOISOMERASE_II"/>
    <property type="match status" value="1"/>
</dbReference>
<dbReference type="PROSITE" id="PS50880">
    <property type="entry name" value="TOPRIM"/>
    <property type="match status" value="1"/>
</dbReference>
<sequence length="1473" mass="164107">MATKLPLQNSNAANVAKAPAKSRAAAGGKTIEEMYQKKSQLEHILLRPDTYIGSIEKHTQTLWVYEKDEMVQRPVTYVPGLYKIFDEILVNAADNKQRDAKMDSVQVVIDVEQNLISVCNSGAGVPVEIHQEEGIYVPEMIFGHLLTSSNYDDNVKKTTGGRNGYGAKLTNIFSTEFIIETADGKRLKKYKQVFENNMGKKSEPVITKCNKSENWTKVTFKPDLKKFNMTELEDDVVALMSKRVFDIAGCLGKSVKVELNGKQIPVKSFTDYVDLYLSAANKSRTEDPLPRLTEKVNDRWEVCVSLSEGQFQQVSFVNSIATIKGGTHVDYVTSQITNHIVAAVNKKNKNANVKAHNVKNHLWVFVNALIDNPAFDSQTKETLTLRQSSFGSKCELSEDFLKKVGKSGVVENLLSWADFKQNKDLKKSDGAKTGRVLVEKLDDAAEAGGKNSRLCTLILTEGDSAKSLALAGRSVLGNNYCGVFPLRGKLLNVREASTTQITNNKEIENLKKILGLKQNMKYENVNSLRYGQMMIMTDQDHDGSHIKGLLINFIHSFWPSLLQVPSFLVEFITPIVKATRKGTKKVLSFYSMPEYEEWKESLKGNATGWDIKYYKGLGTSTAEEGKEYFSNLGLHKKDFVWEDEQDGEAIELAFSKKKIEARKNWLSSYVPGNHLDQRQPKVTYSDFVNKELILFSMADLQRSIPSMVDGLKPGQRKILFVAFKKIARKEMKVAQLVGYVSLLSAYHHGEQSLASAIIGMAQDYVGSNNINLLLPNGQFGTRTSGGKDSASARYIFTKLSPVTRILFPKDDDLLLDYLNEDGQRIEPTWYMPIIPTVLVNGAEGIGTGWSTFIPNYNPREIVANVRRLLNGESMVPMDPWYRGFKGTIEKTASKEGGCTYTITGLYEEVDETTIRITELPIRRWNDDYKNFLQSLKTDNGAPFFQDVKAYNDEKSVDFDLILSEENMLAARQEGFLKKFKLTTTIATSNMHLFDKKGVIKKYVTPEQILEEFFDLRFEYYEKRKETVVKNMEIELLKLENKARFILAVLSGEIIVNKRKKADIVEDLRQKGFTPFPRKAESVEAAIAGAVDDDAAEEPEEILVDPESSSSYIPGSEYDYLLAMAIASLTIEKVEELLADRDKMIIAVADMKKTTPKSLWLSDLESLDKELEKLDLKDAQVQQAIEAAQKKIRAKSGAAVKVKRQAPKKPAPKKTTKKASESETTEASYSAMDTDNNVAEVVKPKARQGAKKKASESETTEASHSAMDTDNNVAEVVKPKGRQGAKKKAPAAAKEVEEDEMLDLAQRLAQYNFGSAPADSSKTAETSKAIAVDDDDDDVVVEVAPVKKGGRKPAATKAAKPPAAPRKRGKQTVASTEVLAIGVSPEKKVRKMRSSPFNKKSSSVMSRLADNKEEESSENVAGNSSSEKSGGDVSAISRPQRANRRKMTYVLSDSESESANDSEFDDIEDDEDDE</sequence>
<gene>
    <name type="primary">TOP2</name>
    <name type="ordered locus">At3g23890</name>
    <name type="ORF">F14O13.7</name>
</gene>
<protein>
    <recommendedName>
        <fullName>DNA topoisomerase 2</fullName>
        <ecNumber evidence="3">5.6.2.2</ecNumber>
    </recommendedName>
    <alternativeName>
        <fullName>DNA topoisomerase II</fullName>
    </alternativeName>
</protein>
<reference key="1">
    <citation type="journal article" date="1994" name="Plant Physiol.">
        <title>Characterization of a DNA Topoisomerase II cDNA from Arabidopsis thaliana.</title>
        <authorList>
            <person name="Xie S."/>
            <person name="Lam E."/>
        </authorList>
    </citation>
    <scope>NUCLEOTIDE SEQUENCE [MRNA]</scope>
    <source>
        <strain>cv. Columbia</strain>
    </source>
</reference>
<reference key="2">
    <citation type="journal article" date="2000" name="DNA Res.">
        <title>Structural analysis of Arabidopsis thaliana chromosome 3. II. Sequence features of the 4,251,695 bp regions covered by 90 P1, TAC and BAC clones.</title>
        <authorList>
            <person name="Kaneko T."/>
            <person name="Katoh T."/>
            <person name="Sato S."/>
            <person name="Nakamura Y."/>
            <person name="Asamizu E."/>
            <person name="Tabata S."/>
        </authorList>
    </citation>
    <scope>NUCLEOTIDE SEQUENCE [LARGE SCALE GENOMIC DNA]</scope>
    <source>
        <strain>cv. Columbia</strain>
    </source>
</reference>
<reference key="3">
    <citation type="journal article" date="2017" name="Plant J.">
        <title>Araport11: a complete reannotation of the Arabidopsis thaliana reference genome.</title>
        <authorList>
            <person name="Cheng C.Y."/>
            <person name="Krishnakumar V."/>
            <person name="Chan A.P."/>
            <person name="Thibaud-Nissen F."/>
            <person name="Schobel S."/>
            <person name="Town C.D."/>
        </authorList>
    </citation>
    <scope>GENOME REANNOTATION</scope>
    <source>
        <strain>cv. Columbia</strain>
    </source>
</reference>
<reference key="4">
    <citation type="journal article" date="1994" name="Nucleic Acids Res.">
        <title>Abundance of nuclear DNA topoisomerase II is correlated with proliferation in Arabidopsis thaliana.</title>
        <authorList>
            <person name="Xie S."/>
            <person name="Lam E."/>
        </authorList>
    </citation>
    <scope>NUCLEOTIDE SEQUENCE [GENOMIC DNA] OF 1202-1304</scope>
    <source>
        <strain>cv. Columbia</strain>
        <strain>cv. Kas-1</strain>
    </source>
</reference>
<reference key="5">
    <citation type="submission" date="1992-02" db="EMBL/GenBank/DDBJ databases">
        <title>PCR-assisted cloning of a topoisomerase II gene from Arabidopsis.</title>
        <authorList>
            <person name="Gerhold D."/>
            <person name="Parsons A."/>
            <person name="Hadwiger L.A."/>
        </authorList>
    </citation>
    <scope>NUCLEOTIDE SEQUENCE [GENOMIC DNA] OF 751-838</scope>
</reference>